<gene>
    <name evidence="1" type="primary">FANCI</name>
</gene>
<dbReference type="EMBL" id="AB378696">
    <property type="protein sequence ID" value="BAG06920.1"/>
    <property type="molecule type" value="mRNA"/>
</dbReference>
<dbReference type="RefSeq" id="NP_001108323.1">
    <property type="nucleotide sequence ID" value="NM_001114851.1"/>
</dbReference>
<dbReference type="PDB" id="6TNF">
    <property type="method" value="EM"/>
    <property type="resolution" value="3.80 A"/>
    <property type="chains" value="B=1-1338"/>
</dbReference>
<dbReference type="PDB" id="6TNG">
    <property type="method" value="EM"/>
    <property type="resolution" value="4.10 A"/>
    <property type="chains" value="B=1-1338"/>
</dbReference>
<dbReference type="PDB" id="8A2Q">
    <property type="method" value="EM"/>
    <property type="resolution" value="3.53 A"/>
    <property type="chains" value="B=1-1338"/>
</dbReference>
<dbReference type="PDB" id="9FFB">
    <property type="method" value="EM"/>
    <property type="resolution" value="3.59 A"/>
    <property type="chains" value="B=1-1338"/>
</dbReference>
<dbReference type="PDB" id="9FFF">
    <property type="method" value="EM"/>
    <property type="resolution" value="3.68 A"/>
    <property type="chains" value="B=1-1338"/>
</dbReference>
<dbReference type="PDBsum" id="6TNF"/>
<dbReference type="PDBsum" id="6TNG"/>
<dbReference type="PDBsum" id="8A2Q"/>
<dbReference type="PDBsum" id="9FFB"/>
<dbReference type="PDBsum" id="9FFF"/>
<dbReference type="EMDB" id="EMD-10531"/>
<dbReference type="EMDB" id="EMD-10532"/>
<dbReference type="EMDB" id="EMD-15101"/>
<dbReference type="EMDB" id="EMD-50353"/>
<dbReference type="EMDB" id="EMD-50355"/>
<dbReference type="SMR" id="B0I564"/>
<dbReference type="DIP" id="DIP-46355N"/>
<dbReference type="IntAct" id="B0I564">
    <property type="interactions" value="1"/>
</dbReference>
<dbReference type="Ensembl" id="ENSGALT00015056714">
    <property type="protein sequence ID" value="ENSGALP00015034347"/>
    <property type="gene ID" value="ENSGALG00015023174"/>
</dbReference>
<dbReference type="GeneID" id="415491"/>
<dbReference type="KEGG" id="gga:415491"/>
<dbReference type="CTD" id="55215"/>
<dbReference type="VEuPathDB" id="HostDB:geneid_415491"/>
<dbReference type="PhylomeDB" id="B0I564"/>
<dbReference type="Reactome" id="R-GGA-351465">
    <property type="pathway name" value="Fanconi Anemia Pathway in DNA repair"/>
</dbReference>
<dbReference type="Proteomes" id="UP000000539">
    <property type="component" value="Unplaced"/>
</dbReference>
<dbReference type="GO" id="GO:0005654">
    <property type="term" value="C:nucleoplasm"/>
    <property type="evidence" value="ECO:0000304"/>
    <property type="project" value="Reactome"/>
</dbReference>
<dbReference type="GO" id="GO:0006281">
    <property type="term" value="P:DNA repair"/>
    <property type="evidence" value="ECO:0007669"/>
    <property type="project" value="InterPro"/>
</dbReference>
<dbReference type="CDD" id="cd11720">
    <property type="entry name" value="FANCI"/>
    <property type="match status" value="1"/>
</dbReference>
<dbReference type="InterPro" id="IPR026171">
    <property type="entry name" value="FANCI"/>
</dbReference>
<dbReference type="InterPro" id="IPR029310">
    <property type="entry name" value="FANCI_HD1"/>
</dbReference>
<dbReference type="InterPro" id="IPR029312">
    <property type="entry name" value="FANCI_HD2"/>
</dbReference>
<dbReference type="InterPro" id="IPR029308">
    <property type="entry name" value="FANCI_S1"/>
</dbReference>
<dbReference type="InterPro" id="IPR029305">
    <property type="entry name" value="FANCI_S1-cap"/>
</dbReference>
<dbReference type="InterPro" id="IPR029315">
    <property type="entry name" value="FANCI_S2"/>
</dbReference>
<dbReference type="InterPro" id="IPR029313">
    <property type="entry name" value="FANCI_S3"/>
</dbReference>
<dbReference type="InterPro" id="IPR029314">
    <property type="entry name" value="FANCI_S4"/>
</dbReference>
<dbReference type="PANTHER" id="PTHR21818">
    <property type="entry name" value="BC025462 PROTEIN"/>
    <property type="match status" value="1"/>
</dbReference>
<dbReference type="PANTHER" id="PTHR21818:SF0">
    <property type="entry name" value="FANCONI ANEMIA GROUP I PROTEIN"/>
    <property type="match status" value="1"/>
</dbReference>
<dbReference type="Pfam" id="PF14679">
    <property type="entry name" value="FANCI_HD1"/>
    <property type="match status" value="1"/>
</dbReference>
<dbReference type="Pfam" id="PF14680">
    <property type="entry name" value="FANCI_HD2"/>
    <property type="match status" value="1"/>
</dbReference>
<dbReference type="Pfam" id="PF14675">
    <property type="entry name" value="FANCI_S1"/>
    <property type="match status" value="1"/>
</dbReference>
<dbReference type="Pfam" id="PF14674">
    <property type="entry name" value="FANCI_S1-cap"/>
    <property type="match status" value="1"/>
</dbReference>
<dbReference type="Pfam" id="PF14676">
    <property type="entry name" value="FANCI_S2"/>
    <property type="match status" value="1"/>
</dbReference>
<dbReference type="Pfam" id="PF14677">
    <property type="entry name" value="FANCI_S3"/>
    <property type="match status" value="1"/>
</dbReference>
<dbReference type="Pfam" id="PF14678">
    <property type="entry name" value="FANCI_S4"/>
    <property type="match status" value="1"/>
</dbReference>
<name>FANCI_CHICK</name>
<feature type="chain" id="PRO_0000462205" description="Fanconi anemia group I protein">
    <location>
        <begin position="1"/>
        <end position="1338"/>
    </location>
</feature>
<feature type="modified residue" description="Phosphoserine" evidence="3">
    <location>
        <position position="558"/>
    </location>
</feature>
<feature type="modified residue" description="Phosphoserine" evidence="3">
    <location>
        <position position="561"/>
    </location>
</feature>
<feature type="modified residue" description="Phosphothreonine" evidence="3">
    <location>
        <position position="567"/>
    </location>
</feature>
<feature type="cross-link" description="Glycyl lysine isopeptide (Lys-Gly) (interchain with G-Cter in ubiquitin)" evidence="1">
    <location>
        <position position="525"/>
    </location>
</feature>
<feature type="mutagenesis site" description="Phosphomimetic mutation that promotes ubiquitination on FANCD2; when associated with D-561 and D-567." evidence="3">
    <original>S</original>
    <variation>D</variation>
    <location>
        <position position="558"/>
    </location>
</feature>
<feature type="mutagenesis site" description="Phosphomimetic mutation that promotes ubiquitination on FANCD2; when associated with D-558 and D-567." evidence="3">
    <original>S</original>
    <variation>D</variation>
    <location>
        <position position="561"/>
    </location>
</feature>
<feature type="mutagenesis site" description="Phosphomimetic mutation that promotes ubiquitination on FANCD2; when associated with D-558 and D-561." evidence="3">
    <original>T</original>
    <variation>D</variation>
    <location>
        <position position="567"/>
    </location>
</feature>
<protein>
    <recommendedName>
        <fullName evidence="1">Fanconi anemia group I protein</fullName>
    </recommendedName>
</protein>
<evidence type="ECO:0000250" key="1">
    <source>
        <dbReference type="UniProtKB" id="Q9NVI1"/>
    </source>
</evidence>
<evidence type="ECO:0000269" key="2">
    <source>
    </source>
</evidence>
<evidence type="ECO:0000269" key="3">
    <source>
    </source>
</evidence>
<evidence type="ECO:0000269" key="4">
    <source>
    </source>
</evidence>
<evidence type="ECO:0000305" key="5"/>
<evidence type="ECO:0007744" key="6">
    <source>
        <dbReference type="PDB" id="6TNF"/>
    </source>
</evidence>
<evidence type="ECO:0007744" key="7">
    <source>
        <dbReference type="PDB" id="6TNG"/>
    </source>
</evidence>
<evidence type="ECO:0007744" key="8">
    <source>
        <dbReference type="PDB" id="8A2Q"/>
    </source>
</evidence>
<evidence type="ECO:0007744" key="9">
    <source>
        <dbReference type="PDB" id="9FFB"/>
    </source>
</evidence>
<evidence type="ECO:0007744" key="10">
    <source>
        <dbReference type="PDB" id="9FFF"/>
    </source>
</evidence>
<sequence>MAQRILQLAAEGSPERLQEALQGLTEGELGDMVTRQALRGRETAALLKGIFKGSPCSQQSGVLRRLQVYKHCVSLVESGDLHVGKVSEIIGLLMLEARQLPGHALAELATLFVEVIKRGSLSNGKSLELFSTVLTALSNSKESLAYGKGELNGEEFKKQLINTLCSSKWDPQCVIHLANMFRDIPLSGEELQFVVEKVLRMFSKLDLQEIPPLVYQLLLLSAKGSKKTVLEGIISFFNQLDKRQKEEQRVPQSADLEVATVPLDQLRHVEGTVILHIVSAINLDQDIGEELIKHLKTEQQKDPGKALCPFSVSLLLSTAVKHRLQEQIFDFLKTSITRSCKDLQILQASKFLQDLCPQQYDVTAVILEVVKNSAFGWDHVTQGLVDLGFSLMESYEPKKSFGGKAAETNLGLSKMPAQQACKLGASILLETFKVHEPIRSDILEQVLNRVLTKAASPVSHFIDLLSNIVVSAPLVLQNSSSRVTETFDNLSFLPIDTVQGLLRAVQPLLKVSMSVRDSLILVLQKAIFSRQLDARKAAVAGFLLLLRNFKILGSLTSSQCSQAIGATQVQADVHACYNSAANEAFCLEILGSLRRCLSQQADVRLMLYEGFYDVLRRNSQLASSIMETLLSQIKQYYLPQQDLLPPLKLEGCIMAQGDQIFLQEPLAHLLCCIQHCLAWYKSTVHLCKGAEDEEEEEDVGFEQNFEEMLESVTRRMIKSELEDFELDKSADFSPSSGVGVKNNIYAIQVMGICEVLIEYNFKIGNFSKNKFEDVLGLFTCYNKLSEILKEKAGKNKSTLGNRIARSFLSMGFVSTLLTALFRDNAQSHEESLAVLRSSTEFMRYAVSVALQKVQQLEEMGQTDGPDGQNPEKMFQNLCKITRVLLWRYTSIPTAVEESGKKKGKSISLLCLEGLLRIFNTMQQLYAARIPQFLQALDITDGDAEEADINVTEKAAFQIRQFQRSLVNQLSSAEDDFNSKETQLLITILSTLSKLLDPGSQQFLQFLTWTVKICKENALEDLSCCKGLLTLLFSLHVLYKSPVSLLRELAQDIHACLGDIDQDVEIESRSHFAIVNVKTAAPTVCLLVLGQADKVLEEVDWLIKRLTILGSDTSEDSTQASNQTQALEKGVILQLGTLLTVFHELVQTALPAGSCVDSLLRSLSKTYAILTSLIKHYIQACRSTSNTVPGRLEKLVKLSGSHLTPQCYSFITYVQNIHSESLSFAEEKKKKKKEDETAVVSTVMAKVLRDTKPIPNLIFAIEQYEKFLIHLSKKSKVNLMQYMKLSTSRDFRINASMLDSVLQEQNTEDAENEPDNNQSGTAEQPDENQEPQKKRRRKK</sequence>
<proteinExistence type="evidence at protein level"/>
<accession>B0I564</accession>
<reference key="1">
    <citation type="submission" date="2008-02" db="EMBL/GenBank/DDBJ databases">
        <title>Fanconi anemia protein FANCI is phosphorylated following DNA damage.</title>
        <authorList>
            <person name="Ishiai M."/>
            <person name="Kitao H."/>
            <person name="Takata M."/>
        </authorList>
    </citation>
    <scope>NUCLEOTIDE SEQUENCE [MRNA]</scope>
</reference>
<reference evidence="6 7" key="2">
    <citation type="journal article" date="2020" name="Nat. Struct. Mol. Biol.">
        <title>FANCD2-FANCI is a clamp stabilized on DNA by monoubiquitination of FANCD2 during DNA repair.</title>
        <authorList>
            <person name="Alcon P."/>
            <person name="Shakeel S."/>
            <person name="Chen Z.A."/>
            <person name="Rappsilber J."/>
            <person name="Patel K.J."/>
            <person name="Passmore L.A."/>
        </authorList>
    </citation>
    <scope>STRUCTURE BY ELECTRON MICROSCOPY (3.80 ANGSTROMS)</scope>
    <scope>FUNCTION</scope>
    <scope>SUBUNIT</scope>
</reference>
<reference evidence="8" key="3">
    <citation type="journal article" date="2022" name="Nat. Struct. Mol. Biol.">
        <title>The DNA-damage kinase ATR activates the FANCD2-FANCI clamp by priming it for ubiquitination.</title>
        <authorList>
            <person name="Sijacki T."/>
            <person name="Alcon P."/>
            <person name="Chen Z.A."/>
            <person name="McLaughlin S.H."/>
            <person name="Shakeel S."/>
            <person name="Rappsilber J."/>
            <person name="Passmore L.A."/>
        </authorList>
    </citation>
    <scope>STRUCTURE BY ELECTRON MICROSCOPY (3.53 ANGSTROMS) OF MUTANT ASP-558; ASP-561 AND ASP-567</scope>
    <scope>FUNCTION</scope>
    <scope>SUBUNIT</scope>
    <scope>PHOSPHORYLATION AT SER-558; SER-561 AND THR-567</scope>
    <scope>MUTAGENESIS OF SER-558; SER-561 AND THR-567</scope>
</reference>
<reference evidence="9 10" key="4">
    <citation type="journal article" date="2024" name="Nature">
        <title>FANCD2-FANCI surveys DNA and recognizes double- to single-stranded junctions.</title>
        <authorList>
            <person name="Alcon P."/>
            <person name="Kaczmarczyk A.P."/>
            <person name="Ray K.K."/>
            <person name="Liolios T."/>
            <person name="Guilbaud G."/>
            <person name="Sijacki T."/>
            <person name="Shen Y."/>
            <person name="McLaughlin S.H."/>
            <person name="Sale J.E."/>
            <person name="Knipscheer P."/>
            <person name="Rueda D.S."/>
            <person name="Passmore L.A."/>
        </authorList>
    </citation>
    <scope>STRUCTURE BY ELECTRON MICROSCOPY (3.59 ANGSTROMS)</scope>
    <scope>FUNCTION</scope>
    <scope>SUBUNIT</scope>
    <scope>INTERACTION WITH FANCD2</scope>
</reference>
<keyword id="KW-0002">3D-structure</keyword>
<keyword id="KW-1017">Isopeptide bond</keyword>
<keyword id="KW-0597">Phosphoprotein</keyword>
<keyword id="KW-1185">Reference proteome</keyword>
<keyword id="KW-0832">Ubl conjugation</keyword>
<comment type="function">
    <text evidence="1 2 3 4">Plays an essential role in the repair of DNA double-strand breaks by homologous recombination and in the repair of interstrand DNA cross-links (ICLs) by promoting FANCD2 monoubiquitination by FANCL and participating in recruitment to DNA repair sites (By similarity). The FANCI-FANCD2 complex binds and scans double-stranded DNA (dsDNA) for DNA damage; this complex stalls at DNA junctions between double-stranded DNA and single-stranded DNA (PubMed:32066963, PubMed:36050501, PubMed:39085614). Participates in S phase and G2 phase checkpoint activation upon DNA damage (By similarity).</text>
</comment>
<comment type="subunit">
    <text evidence="1 2 3 4">Homodimer (By similarity). Part of a FANCI-FANCD2 heterodimeric complex that binds and scans dsDNA for DNA damage (PubMed:32066963, PubMed:36050501, PubMed:39085614). Interacts with FANCL (PubMed:32066963, PubMed:36050501, PubMed:39085614). Interacts with MTMR15/FAN1 (By similarity). Interacts with POLN (By similarity). Interacts with UBL5; the interaction promotes FANCI homodimerization (By similarity).</text>
</comment>
<comment type="interaction">
    <interactant intactId="EBI-15734261">
        <id>B0I564</id>
    </interactant>
    <interactant intactId="EBI-15734282">
        <id>Q68Y81</id>
        <label>fancd2</label>
    </interactant>
    <organismsDiffer>false</organismsDiffer>
    <experiments>4</experiments>
</comment>
<comment type="PTM">
    <text evidence="1 2 3 4">Monoubiquitinated by FANCL during S phase and upon genotoxic stress (By similarity). Deubiquitinated by USP1 as cells enter G2/M, or once DNA repair is completed (By similarity). Monoubiquitination requires the FANCA-FANCB-FANCC-FANCE-FANCF-FANCG-FANCM complex (By similarity). Ubiquitination is required for binding to chromatin, DNA repair, and normal cell cycle progression (By similarity). Monoubiquitination is stimulated by DNA-binding (PubMed:32066963, PubMed:36050501, PubMed:39085614).</text>
</comment>
<comment type="PTM">
    <text evidence="1 3">Phosphorylated in response to DNA damage by ATM and/or ATR (By similarity). Phosphorylation of FANCI promotes ubiquitination of FANCD2, which prevents DNA release from the FANCI-FANCD2 complex (PubMed:36050501).</text>
</comment>
<comment type="similarity">
    <text evidence="5">Belongs to the Fanconi anemia group I protein family.</text>
</comment>
<organism>
    <name type="scientific">Gallus gallus</name>
    <name type="common">Chicken</name>
    <dbReference type="NCBI Taxonomy" id="9031"/>
    <lineage>
        <taxon>Eukaryota</taxon>
        <taxon>Metazoa</taxon>
        <taxon>Chordata</taxon>
        <taxon>Craniata</taxon>
        <taxon>Vertebrata</taxon>
        <taxon>Euteleostomi</taxon>
        <taxon>Archelosauria</taxon>
        <taxon>Archosauria</taxon>
        <taxon>Dinosauria</taxon>
        <taxon>Saurischia</taxon>
        <taxon>Theropoda</taxon>
        <taxon>Coelurosauria</taxon>
        <taxon>Aves</taxon>
        <taxon>Neognathae</taxon>
        <taxon>Galloanserae</taxon>
        <taxon>Galliformes</taxon>
        <taxon>Phasianidae</taxon>
        <taxon>Phasianinae</taxon>
        <taxon>Gallus</taxon>
    </lineage>
</organism>